<evidence type="ECO:0000255" key="1"/>
<evidence type="ECO:0000255" key="2">
    <source>
        <dbReference type="PROSITE-ProRule" id="PRU01128"/>
    </source>
</evidence>
<evidence type="ECO:0000269" key="3">
    <source>
    </source>
</evidence>
<evidence type="ECO:0000305" key="4"/>
<protein>
    <recommendedName>
        <fullName>Protein yippee-like 1</fullName>
    </recommendedName>
    <alternativeName>
        <fullName>DGL-1</fullName>
    </alternativeName>
    <alternativeName>
        <fullName>Mdgl-1</fullName>
    </alternativeName>
</protein>
<accession>Q9ESC7</accession>
<keyword id="KW-0479">Metal-binding</keyword>
<keyword id="KW-0539">Nucleus</keyword>
<keyword id="KW-1185">Reference proteome</keyword>
<keyword id="KW-0862">Zinc</keyword>
<sequence length="118" mass="13468">MVKMTKSKTFQAYLPHCHRTYSCIHCRAHLANHDELISKSFQGSQGRAYLFNSVVNVGCGPAEERVLLTGLHAVADIYCENCKTTLGWKYEHAFESSQKYKEGKFIIELAHMIKDNGW</sequence>
<name>YPEL1_MOUSE</name>
<dbReference type="EMBL" id="AF190624">
    <property type="protein sequence ID" value="AAG17143.1"/>
    <property type="molecule type" value="mRNA"/>
</dbReference>
<dbReference type="EMBL" id="AK005955">
    <property type="protein sequence ID" value="BAB24338.1"/>
    <property type="molecule type" value="mRNA"/>
</dbReference>
<dbReference type="EMBL" id="AK006505">
    <property type="protein sequence ID" value="BAB24624.1"/>
    <property type="molecule type" value="mRNA"/>
</dbReference>
<dbReference type="EMBL" id="AK006858">
    <property type="protein sequence ID" value="BAB24767.1"/>
    <property type="molecule type" value="mRNA"/>
</dbReference>
<dbReference type="EMBL" id="AK014931">
    <property type="protein sequence ID" value="BAB29625.1"/>
    <property type="molecule type" value="mRNA"/>
</dbReference>
<dbReference type="EMBL" id="AK015752">
    <property type="protein sequence ID" value="BAB29957.1"/>
    <property type="molecule type" value="mRNA"/>
</dbReference>
<dbReference type="EMBL" id="AK018910">
    <property type="protein sequence ID" value="BAB31479.1"/>
    <property type="molecule type" value="mRNA"/>
</dbReference>
<dbReference type="EMBL" id="AK019819">
    <property type="protein sequence ID" value="BAB31864.1"/>
    <property type="molecule type" value="mRNA"/>
</dbReference>
<dbReference type="EMBL" id="AK076063">
    <property type="protein sequence ID" value="BAC36157.1"/>
    <property type="molecule type" value="mRNA"/>
</dbReference>
<dbReference type="CCDS" id="CCDS37268.1"/>
<dbReference type="RefSeq" id="NP_001277976.1">
    <property type="nucleotide sequence ID" value="NM_001291047.1"/>
</dbReference>
<dbReference type="RefSeq" id="NP_001277982.1">
    <property type="nucleotide sequence ID" value="NM_001291053.1"/>
</dbReference>
<dbReference type="RefSeq" id="NP_075738.1">
    <property type="nucleotide sequence ID" value="NM_023249.6"/>
</dbReference>
<dbReference type="RefSeq" id="XP_030104774.1">
    <property type="nucleotide sequence ID" value="XM_030248914.1"/>
</dbReference>
<dbReference type="SMR" id="Q9ESC7"/>
<dbReference type="FunCoup" id="Q9ESC7">
    <property type="interactions" value="37"/>
</dbReference>
<dbReference type="STRING" id="10090.ENSMUSP00000039760"/>
<dbReference type="PaxDb" id="10090-ENSMUSP00000039760"/>
<dbReference type="ProteomicsDB" id="275228"/>
<dbReference type="Antibodypedia" id="45067">
    <property type="antibodies" value="63 antibodies from 21 providers"/>
</dbReference>
<dbReference type="DNASU" id="106369"/>
<dbReference type="Ensembl" id="ENSMUST00000035682.16">
    <property type="protein sequence ID" value="ENSMUSP00000039760.8"/>
    <property type="gene ID" value="ENSMUSG00000022773.20"/>
</dbReference>
<dbReference type="Ensembl" id="ENSMUST00000231394.2">
    <property type="protein sequence ID" value="ENSMUSP00000156275.2"/>
    <property type="gene ID" value="ENSMUSG00000022773.20"/>
</dbReference>
<dbReference type="GeneID" id="106369"/>
<dbReference type="KEGG" id="mmu:106369"/>
<dbReference type="UCSC" id="uc007yju.2">
    <property type="organism name" value="mouse"/>
</dbReference>
<dbReference type="AGR" id="MGI:1913303"/>
<dbReference type="CTD" id="29799"/>
<dbReference type="MGI" id="MGI:1913303">
    <property type="gene designation" value="Ypel1"/>
</dbReference>
<dbReference type="VEuPathDB" id="HostDB:ENSMUSG00000022773"/>
<dbReference type="eggNOG" id="KOG3399">
    <property type="taxonomic scope" value="Eukaryota"/>
</dbReference>
<dbReference type="GeneTree" id="ENSGT00940000161453"/>
<dbReference type="HOGENOM" id="CLU_043857_5_2_1"/>
<dbReference type="InParanoid" id="Q9ESC7"/>
<dbReference type="PhylomeDB" id="Q9ESC7"/>
<dbReference type="TreeFam" id="TF313936"/>
<dbReference type="BioGRID-ORCS" id="106369">
    <property type="hits" value="2 hits in 76 CRISPR screens"/>
</dbReference>
<dbReference type="ChiTaRS" id="Ypel1">
    <property type="organism name" value="mouse"/>
</dbReference>
<dbReference type="PRO" id="PR:Q9ESC7"/>
<dbReference type="Proteomes" id="UP000000589">
    <property type="component" value="Chromosome 16"/>
</dbReference>
<dbReference type="RNAct" id="Q9ESC7">
    <property type="molecule type" value="protein"/>
</dbReference>
<dbReference type="Bgee" id="ENSMUSG00000022773">
    <property type="expression patterns" value="Expressed in spermatocyte and 170 other cell types or tissues"/>
</dbReference>
<dbReference type="ExpressionAtlas" id="Q9ESC7">
    <property type="expression patterns" value="baseline and differential"/>
</dbReference>
<dbReference type="GO" id="GO:0005634">
    <property type="term" value="C:nucleus"/>
    <property type="evidence" value="ECO:0007669"/>
    <property type="project" value="UniProtKB-SubCell"/>
</dbReference>
<dbReference type="GO" id="GO:0046872">
    <property type="term" value="F:metal ion binding"/>
    <property type="evidence" value="ECO:0007669"/>
    <property type="project" value="UniProtKB-KW"/>
</dbReference>
<dbReference type="InterPro" id="IPR034751">
    <property type="entry name" value="Yippee"/>
</dbReference>
<dbReference type="InterPro" id="IPR004910">
    <property type="entry name" value="Yippee/Mis18/Cereblon"/>
</dbReference>
<dbReference type="InterPro" id="IPR039058">
    <property type="entry name" value="Yippee_fam"/>
</dbReference>
<dbReference type="PANTHER" id="PTHR13848">
    <property type="entry name" value="PROTEIN YIPPEE-LIKE CG15309-RELATED"/>
    <property type="match status" value="1"/>
</dbReference>
<dbReference type="Pfam" id="PF03226">
    <property type="entry name" value="Yippee-Mis18"/>
    <property type="match status" value="1"/>
</dbReference>
<dbReference type="PROSITE" id="PS51792">
    <property type="entry name" value="YIPPEE"/>
    <property type="match status" value="1"/>
</dbReference>
<comment type="function">
    <text>May play a role in epithelioid conversion of fibroblasts.</text>
</comment>
<comment type="subcellular location">
    <subcellularLocation>
        <location evidence="3">Nucleus</location>
    </subcellularLocation>
</comment>
<comment type="developmental stage">
    <text evidence="3">At 9.5 dpc, expressed throughout the ventral mesoderm of the trunk and head. At 10.5 dpc, maintained in the ventral aspect of the axial tissues; detected in the branchial clefts, branchial arches, in the heart and in the cranial mesenchyme underlying the mid-brain. No expression in the dorsal part of the embryo, in the somatopleure nor in the splanchnopleure. At 11.0 dpc, expressed in the branchial arches in the mesenchyme underlying the ectoderm, but not the endoderm.</text>
</comment>
<comment type="similarity">
    <text evidence="4">Belongs to the yippee family.</text>
</comment>
<organism>
    <name type="scientific">Mus musculus</name>
    <name type="common">Mouse</name>
    <dbReference type="NCBI Taxonomy" id="10090"/>
    <lineage>
        <taxon>Eukaryota</taxon>
        <taxon>Metazoa</taxon>
        <taxon>Chordata</taxon>
        <taxon>Craniata</taxon>
        <taxon>Vertebrata</taxon>
        <taxon>Euteleostomi</taxon>
        <taxon>Mammalia</taxon>
        <taxon>Eutheria</taxon>
        <taxon>Euarchontoglires</taxon>
        <taxon>Glires</taxon>
        <taxon>Rodentia</taxon>
        <taxon>Myomorpha</taxon>
        <taxon>Muroidea</taxon>
        <taxon>Muridae</taxon>
        <taxon>Murinae</taxon>
        <taxon>Mus</taxon>
        <taxon>Mus</taxon>
    </lineage>
</organism>
<feature type="chain" id="PRO_0000212382" description="Protein yippee-like 1">
    <location>
        <begin position="1"/>
        <end position="118"/>
    </location>
</feature>
<feature type="domain" description="Yippee" evidence="2">
    <location>
        <begin position="19"/>
        <end position="116"/>
    </location>
</feature>
<feature type="short sequence motif" description="Nuclear localization signal" evidence="1">
    <location>
        <begin position="99"/>
        <end position="104"/>
    </location>
</feature>
<feature type="binding site" evidence="2">
    <location>
        <position position="23"/>
    </location>
    <ligand>
        <name>Zn(2+)</name>
        <dbReference type="ChEBI" id="CHEBI:29105"/>
    </ligand>
</feature>
<feature type="binding site" evidence="2">
    <location>
        <position position="26"/>
    </location>
    <ligand>
        <name>Zn(2+)</name>
        <dbReference type="ChEBI" id="CHEBI:29105"/>
    </ligand>
</feature>
<feature type="binding site" evidence="2">
    <location>
        <position position="79"/>
    </location>
    <ligand>
        <name>Zn(2+)</name>
        <dbReference type="ChEBI" id="CHEBI:29105"/>
    </ligand>
</feature>
<feature type="binding site" evidence="2">
    <location>
        <position position="82"/>
    </location>
    <ligand>
        <name>Zn(2+)</name>
        <dbReference type="ChEBI" id="CHEBI:29105"/>
    </ligand>
</feature>
<gene>
    <name type="primary">Ypel1</name>
</gene>
<reference key="1">
    <citation type="journal article" date="2001" name="Genes Cells">
        <title>Ypel1: a novel nuclear protein that induces an epithelial-like morphology in fibroblasts.</title>
        <authorList>
            <person name="Farlie P.G."/>
            <person name="Reid C.J."/>
            <person name="Wilcox S."/>
            <person name="Peeters J."/>
            <person name="Reed G."/>
            <person name="Newgreen D.F."/>
        </authorList>
    </citation>
    <scope>NUCLEOTIDE SEQUENCE [MRNA]</scope>
    <scope>SUBCELLULAR LOCATION</scope>
    <scope>DEVELOPMENTAL STAGE</scope>
    <source>
        <strain>C57BL/6J</strain>
        <tissue>Branchial arch region</tissue>
    </source>
</reference>
<reference key="2">
    <citation type="journal article" date="2005" name="Science">
        <title>The transcriptional landscape of the mammalian genome.</title>
        <authorList>
            <person name="Carninci P."/>
            <person name="Kasukawa T."/>
            <person name="Katayama S."/>
            <person name="Gough J."/>
            <person name="Frith M.C."/>
            <person name="Maeda N."/>
            <person name="Oyama R."/>
            <person name="Ravasi T."/>
            <person name="Lenhard B."/>
            <person name="Wells C."/>
            <person name="Kodzius R."/>
            <person name="Shimokawa K."/>
            <person name="Bajic V.B."/>
            <person name="Brenner S.E."/>
            <person name="Batalov S."/>
            <person name="Forrest A.R."/>
            <person name="Zavolan M."/>
            <person name="Davis M.J."/>
            <person name="Wilming L.G."/>
            <person name="Aidinis V."/>
            <person name="Allen J.E."/>
            <person name="Ambesi-Impiombato A."/>
            <person name="Apweiler R."/>
            <person name="Aturaliya R.N."/>
            <person name="Bailey T.L."/>
            <person name="Bansal M."/>
            <person name="Baxter L."/>
            <person name="Beisel K.W."/>
            <person name="Bersano T."/>
            <person name="Bono H."/>
            <person name="Chalk A.M."/>
            <person name="Chiu K.P."/>
            <person name="Choudhary V."/>
            <person name="Christoffels A."/>
            <person name="Clutterbuck D.R."/>
            <person name="Crowe M.L."/>
            <person name="Dalla E."/>
            <person name="Dalrymple B.P."/>
            <person name="de Bono B."/>
            <person name="Della Gatta G."/>
            <person name="di Bernardo D."/>
            <person name="Down T."/>
            <person name="Engstrom P."/>
            <person name="Fagiolini M."/>
            <person name="Faulkner G."/>
            <person name="Fletcher C.F."/>
            <person name="Fukushima T."/>
            <person name="Furuno M."/>
            <person name="Futaki S."/>
            <person name="Gariboldi M."/>
            <person name="Georgii-Hemming P."/>
            <person name="Gingeras T.R."/>
            <person name="Gojobori T."/>
            <person name="Green R.E."/>
            <person name="Gustincich S."/>
            <person name="Harbers M."/>
            <person name="Hayashi Y."/>
            <person name="Hensch T.K."/>
            <person name="Hirokawa N."/>
            <person name="Hill D."/>
            <person name="Huminiecki L."/>
            <person name="Iacono M."/>
            <person name="Ikeo K."/>
            <person name="Iwama A."/>
            <person name="Ishikawa T."/>
            <person name="Jakt M."/>
            <person name="Kanapin A."/>
            <person name="Katoh M."/>
            <person name="Kawasawa Y."/>
            <person name="Kelso J."/>
            <person name="Kitamura H."/>
            <person name="Kitano H."/>
            <person name="Kollias G."/>
            <person name="Krishnan S.P."/>
            <person name="Kruger A."/>
            <person name="Kummerfeld S.K."/>
            <person name="Kurochkin I.V."/>
            <person name="Lareau L.F."/>
            <person name="Lazarevic D."/>
            <person name="Lipovich L."/>
            <person name="Liu J."/>
            <person name="Liuni S."/>
            <person name="McWilliam S."/>
            <person name="Madan Babu M."/>
            <person name="Madera M."/>
            <person name="Marchionni L."/>
            <person name="Matsuda H."/>
            <person name="Matsuzawa S."/>
            <person name="Miki H."/>
            <person name="Mignone F."/>
            <person name="Miyake S."/>
            <person name="Morris K."/>
            <person name="Mottagui-Tabar S."/>
            <person name="Mulder N."/>
            <person name="Nakano N."/>
            <person name="Nakauchi H."/>
            <person name="Ng P."/>
            <person name="Nilsson R."/>
            <person name="Nishiguchi S."/>
            <person name="Nishikawa S."/>
            <person name="Nori F."/>
            <person name="Ohara O."/>
            <person name="Okazaki Y."/>
            <person name="Orlando V."/>
            <person name="Pang K.C."/>
            <person name="Pavan W.J."/>
            <person name="Pavesi G."/>
            <person name="Pesole G."/>
            <person name="Petrovsky N."/>
            <person name="Piazza S."/>
            <person name="Reed J."/>
            <person name="Reid J.F."/>
            <person name="Ring B.Z."/>
            <person name="Ringwald M."/>
            <person name="Rost B."/>
            <person name="Ruan Y."/>
            <person name="Salzberg S.L."/>
            <person name="Sandelin A."/>
            <person name="Schneider C."/>
            <person name="Schoenbach C."/>
            <person name="Sekiguchi K."/>
            <person name="Semple C.A."/>
            <person name="Seno S."/>
            <person name="Sessa L."/>
            <person name="Sheng Y."/>
            <person name="Shibata Y."/>
            <person name="Shimada H."/>
            <person name="Shimada K."/>
            <person name="Silva D."/>
            <person name="Sinclair B."/>
            <person name="Sperling S."/>
            <person name="Stupka E."/>
            <person name="Sugiura K."/>
            <person name="Sultana R."/>
            <person name="Takenaka Y."/>
            <person name="Taki K."/>
            <person name="Tammoja K."/>
            <person name="Tan S.L."/>
            <person name="Tang S."/>
            <person name="Taylor M.S."/>
            <person name="Tegner J."/>
            <person name="Teichmann S.A."/>
            <person name="Ueda H.R."/>
            <person name="van Nimwegen E."/>
            <person name="Verardo R."/>
            <person name="Wei C.L."/>
            <person name="Yagi K."/>
            <person name="Yamanishi H."/>
            <person name="Zabarovsky E."/>
            <person name="Zhu S."/>
            <person name="Zimmer A."/>
            <person name="Hide W."/>
            <person name="Bult C."/>
            <person name="Grimmond S.M."/>
            <person name="Teasdale R.D."/>
            <person name="Liu E.T."/>
            <person name="Brusic V."/>
            <person name="Quackenbush J."/>
            <person name="Wahlestedt C."/>
            <person name="Mattick J.S."/>
            <person name="Hume D.A."/>
            <person name="Kai C."/>
            <person name="Sasaki D."/>
            <person name="Tomaru Y."/>
            <person name="Fukuda S."/>
            <person name="Kanamori-Katayama M."/>
            <person name="Suzuki M."/>
            <person name="Aoki J."/>
            <person name="Arakawa T."/>
            <person name="Iida J."/>
            <person name="Imamura K."/>
            <person name="Itoh M."/>
            <person name="Kato T."/>
            <person name="Kawaji H."/>
            <person name="Kawagashira N."/>
            <person name="Kawashima T."/>
            <person name="Kojima M."/>
            <person name="Kondo S."/>
            <person name="Konno H."/>
            <person name="Nakano K."/>
            <person name="Ninomiya N."/>
            <person name="Nishio T."/>
            <person name="Okada M."/>
            <person name="Plessy C."/>
            <person name="Shibata K."/>
            <person name="Shiraki T."/>
            <person name="Suzuki S."/>
            <person name="Tagami M."/>
            <person name="Waki K."/>
            <person name="Watahiki A."/>
            <person name="Okamura-Oho Y."/>
            <person name="Suzuki H."/>
            <person name="Kawai J."/>
            <person name="Hayashizaki Y."/>
        </authorList>
    </citation>
    <scope>NUCLEOTIDE SEQUENCE [LARGE SCALE MRNA]</scope>
    <source>
        <strain>C57BL/6J</strain>
        <tissue>Testis</tissue>
    </source>
</reference>
<proteinExistence type="evidence at transcript level"/>